<evidence type="ECO:0000255" key="1">
    <source>
        <dbReference type="HAMAP-Rule" id="MF_00500"/>
    </source>
</evidence>
<evidence type="ECO:0000256" key="2">
    <source>
        <dbReference type="SAM" id="MobiDB-lite"/>
    </source>
</evidence>
<evidence type="ECO:0000305" key="3"/>
<comment type="function">
    <text evidence="1">Binds directly to 16S ribosomal RNA.</text>
</comment>
<comment type="similarity">
    <text evidence="1">Belongs to the bacterial ribosomal protein bS20 family.</text>
</comment>
<protein>
    <recommendedName>
        <fullName evidence="1">Small ribosomal subunit protein bS20</fullName>
    </recommendedName>
    <alternativeName>
        <fullName evidence="3">30S ribosomal protein S20</fullName>
    </alternativeName>
</protein>
<proteinExistence type="inferred from homology"/>
<reference key="1">
    <citation type="journal article" date="2008" name="J. Biotechnol.">
        <title>Ultrafast pyrosequencing of Corynebacterium kroppenstedtii DSM44385 revealed insights into the physiology of a lipophilic corynebacterium that lacks mycolic acids.</title>
        <authorList>
            <person name="Tauch A."/>
            <person name="Schneider J."/>
            <person name="Szczepanowski R."/>
            <person name="Tilker A."/>
            <person name="Viehoever P."/>
            <person name="Gartemann K.-H."/>
            <person name="Arnold W."/>
            <person name="Blom J."/>
            <person name="Brinkrolf K."/>
            <person name="Brune I."/>
            <person name="Goetker S."/>
            <person name="Weisshaar B."/>
            <person name="Goesmann A."/>
            <person name="Droege M."/>
            <person name="Puehler A."/>
        </authorList>
    </citation>
    <scope>NUCLEOTIDE SEQUENCE [LARGE SCALE GENOMIC DNA]</scope>
    <source>
        <strain>DSM 44385 / JCM 11950 / CIP 105744 / CCUG 35717</strain>
    </source>
</reference>
<feature type="chain" id="PRO_1000206492" description="Small ribosomal subunit protein bS20">
    <location>
        <begin position="1"/>
        <end position="87"/>
    </location>
</feature>
<feature type="region of interest" description="Disordered" evidence="2">
    <location>
        <begin position="1"/>
        <end position="25"/>
    </location>
</feature>
<feature type="compositionally biased region" description="Basic residues" evidence="2">
    <location>
        <begin position="1"/>
        <end position="11"/>
    </location>
</feature>
<organism>
    <name type="scientific">Corynebacterium kroppenstedtii (strain DSM 44385 / JCM 11950 / CIP 105744 / CCUG 35717)</name>
    <dbReference type="NCBI Taxonomy" id="645127"/>
    <lineage>
        <taxon>Bacteria</taxon>
        <taxon>Bacillati</taxon>
        <taxon>Actinomycetota</taxon>
        <taxon>Actinomycetes</taxon>
        <taxon>Mycobacteriales</taxon>
        <taxon>Corynebacteriaceae</taxon>
        <taxon>Corynebacterium</taxon>
    </lineage>
</organism>
<dbReference type="EMBL" id="CP001620">
    <property type="protein sequence ID" value="ACR18086.1"/>
    <property type="molecule type" value="Genomic_DNA"/>
</dbReference>
<dbReference type="RefSeq" id="WP_012731973.1">
    <property type="nucleotide sequence ID" value="NC_012704.1"/>
</dbReference>
<dbReference type="SMR" id="C4LJT1"/>
<dbReference type="STRING" id="645127.ckrop_1344"/>
<dbReference type="KEGG" id="ckp:ckrop_1344"/>
<dbReference type="eggNOG" id="COG0268">
    <property type="taxonomic scope" value="Bacteria"/>
</dbReference>
<dbReference type="HOGENOM" id="CLU_160655_0_1_11"/>
<dbReference type="OrthoDB" id="9807974at2"/>
<dbReference type="Proteomes" id="UP000001473">
    <property type="component" value="Chromosome"/>
</dbReference>
<dbReference type="GO" id="GO:0005829">
    <property type="term" value="C:cytosol"/>
    <property type="evidence" value="ECO:0007669"/>
    <property type="project" value="TreeGrafter"/>
</dbReference>
<dbReference type="GO" id="GO:0015935">
    <property type="term" value="C:small ribosomal subunit"/>
    <property type="evidence" value="ECO:0007669"/>
    <property type="project" value="TreeGrafter"/>
</dbReference>
<dbReference type="GO" id="GO:0070181">
    <property type="term" value="F:small ribosomal subunit rRNA binding"/>
    <property type="evidence" value="ECO:0007669"/>
    <property type="project" value="TreeGrafter"/>
</dbReference>
<dbReference type="GO" id="GO:0003735">
    <property type="term" value="F:structural constituent of ribosome"/>
    <property type="evidence" value="ECO:0007669"/>
    <property type="project" value="InterPro"/>
</dbReference>
<dbReference type="GO" id="GO:0006412">
    <property type="term" value="P:translation"/>
    <property type="evidence" value="ECO:0007669"/>
    <property type="project" value="UniProtKB-UniRule"/>
</dbReference>
<dbReference type="FunFam" id="1.20.58.110:FF:000001">
    <property type="entry name" value="30S ribosomal protein S20"/>
    <property type="match status" value="1"/>
</dbReference>
<dbReference type="Gene3D" id="1.20.58.110">
    <property type="entry name" value="Ribosomal protein S20"/>
    <property type="match status" value="1"/>
</dbReference>
<dbReference type="HAMAP" id="MF_00500">
    <property type="entry name" value="Ribosomal_bS20"/>
    <property type="match status" value="1"/>
</dbReference>
<dbReference type="InterPro" id="IPR002583">
    <property type="entry name" value="Ribosomal_bS20"/>
</dbReference>
<dbReference type="InterPro" id="IPR036510">
    <property type="entry name" value="Ribosomal_bS20_sf"/>
</dbReference>
<dbReference type="NCBIfam" id="TIGR00029">
    <property type="entry name" value="S20"/>
    <property type="match status" value="1"/>
</dbReference>
<dbReference type="PANTHER" id="PTHR33398">
    <property type="entry name" value="30S RIBOSOMAL PROTEIN S20"/>
    <property type="match status" value="1"/>
</dbReference>
<dbReference type="PANTHER" id="PTHR33398:SF1">
    <property type="entry name" value="SMALL RIBOSOMAL SUBUNIT PROTEIN BS20C"/>
    <property type="match status" value="1"/>
</dbReference>
<dbReference type="Pfam" id="PF01649">
    <property type="entry name" value="Ribosomal_S20p"/>
    <property type="match status" value="1"/>
</dbReference>
<dbReference type="SUPFAM" id="SSF46992">
    <property type="entry name" value="Ribosomal protein S20"/>
    <property type="match status" value="1"/>
</dbReference>
<gene>
    <name evidence="1" type="primary">rpsT</name>
    <name type="ordered locus">ckrop_1344</name>
</gene>
<accession>C4LJT1</accession>
<name>RS20_CORK4</name>
<keyword id="KW-1185">Reference proteome</keyword>
<keyword id="KW-0687">Ribonucleoprotein</keyword>
<keyword id="KW-0689">Ribosomal protein</keyword>
<keyword id="KW-0694">RNA-binding</keyword>
<keyword id="KW-0699">rRNA-binding</keyword>
<sequence>MANIKSKKKRIKTNEKARQRNKAIRSRLHTENRKFRELVAAGDKAGAEAQLRLASREYDKAVTKGTLHRNNAANKKSAMAKLFNSMD</sequence>